<keyword id="KW-0238">DNA-binding</keyword>
<keyword id="KW-0489">Methyltransferase</keyword>
<keyword id="KW-0680">Restriction system</keyword>
<keyword id="KW-0949">S-adenosyl-L-methionine</keyword>
<keyword id="KW-0808">Transferase</keyword>
<evidence type="ECO:0000250" key="1"/>
<evidence type="ECO:0000303" key="2">
    <source>
    </source>
</evidence>
<evidence type="ECO:0000303" key="3">
    <source>
    </source>
</evidence>
<evidence type="ECO:0000305" key="4"/>
<evidence type="ECO:0000305" key="5">
    <source>
    </source>
</evidence>
<gene>
    <name evidence="3" type="primary">CVIBIM</name>
</gene>
<name>MTC1_PBCVC</name>
<feature type="chain" id="PRO_0000087947" description="Type II methyltransferase M.CviBI">
    <location>
        <begin position="1"/>
        <end position="260"/>
    </location>
</feature>
<feature type="binding site" evidence="1">
    <location>
        <position position="7"/>
    </location>
    <ligand>
        <name>S-adenosyl-L-methionine</name>
        <dbReference type="ChEBI" id="CHEBI:59789"/>
    </ligand>
</feature>
<feature type="binding site" evidence="1">
    <location>
        <position position="11"/>
    </location>
    <ligand>
        <name>S-adenosyl-L-methionine</name>
        <dbReference type="ChEBI" id="CHEBI:59789"/>
    </ligand>
</feature>
<feature type="binding site" evidence="1">
    <location>
        <position position="54"/>
    </location>
    <ligand>
        <name>S-adenosyl-L-methionine</name>
        <dbReference type="ChEBI" id="CHEBI:59789"/>
    </ligand>
</feature>
<feature type="binding site" evidence="1">
    <location>
        <position position="177"/>
    </location>
    <ligand>
        <name>S-adenosyl-L-methionine</name>
        <dbReference type="ChEBI" id="CHEBI:59789"/>
    </ligand>
</feature>
<sequence length="260" mass="30705">MKPIVKWSGGKTDELKRFEDYIPSDCSTFIEPFAGGAATFFHVGNQFENKVLSDVHVELVALYRAIANGKSQAIYDFMKSHANDEKTYYEVRSWKPEDYVDVASRFYYLRKTCFRGMMRYNKNGGFNVPFGRYKTYNFEDIINEEYYNILKDTIILEKSFDYIFETYNDSSNFVFLDPPYDSVFTDYGYCSFGKEEHVRLSNFFKTTKNKCLMVIGATDFIRELYDGYIHTEYEKKYRFKLHSGRVGDEINTTHLVIKNY</sequence>
<reference key="1">
    <citation type="journal article" date="1992" name="Gene">
        <title>Cloning, sequencing, overproduction, and purification of M. CviBI (GANTC) methyltransferase from Chlorella virus NC-1A.</title>
        <authorList>
            <person name="Kan T.N."/>
            <person name="Li L."/>
            <person name="Chandrasegaran S."/>
        </authorList>
    </citation>
    <scope>NUCLEOTIDE SEQUENCE [GENOMIC DNA]</scope>
    <scope>FUNCTION</scope>
</reference>
<reference key="2">
    <citation type="journal article" date="2003" name="Nucleic Acids Res.">
        <title>A nomenclature for restriction enzymes, DNA methyltransferases, homing endonucleases and their genes.</title>
        <authorList>
            <person name="Roberts R.J."/>
            <person name="Belfort M."/>
            <person name="Bestor T."/>
            <person name="Bhagwat A.S."/>
            <person name="Bickle T.A."/>
            <person name="Bitinaite J."/>
            <person name="Blumenthal R.M."/>
            <person name="Degtyarev S.K."/>
            <person name="Dryden D.T."/>
            <person name="Dybvig K."/>
            <person name="Firman K."/>
            <person name="Gromova E.S."/>
            <person name="Gumport R.I."/>
            <person name="Halford S.E."/>
            <person name="Hattman S."/>
            <person name="Heitman J."/>
            <person name="Hornby D.P."/>
            <person name="Janulaitis A."/>
            <person name="Jeltsch A."/>
            <person name="Josephsen J."/>
            <person name="Kiss A."/>
            <person name="Klaenhammer T.R."/>
            <person name="Kobayashi I."/>
            <person name="Kong H."/>
            <person name="Krueger D.H."/>
            <person name="Lacks S."/>
            <person name="Marinus M.G."/>
            <person name="Miyahara M."/>
            <person name="Morgan R.D."/>
            <person name="Murray N.E."/>
            <person name="Nagaraja V."/>
            <person name="Piekarowicz A."/>
            <person name="Pingoud A."/>
            <person name="Raleigh E."/>
            <person name="Rao D.N."/>
            <person name="Reich N."/>
            <person name="Repin V.E."/>
            <person name="Selker E.U."/>
            <person name="Shaw P.C."/>
            <person name="Stein D.C."/>
            <person name="Stoddard B.L."/>
            <person name="Szybalski W."/>
            <person name="Trautner T.A."/>
            <person name="Van Etten J.L."/>
            <person name="Vitor J.M."/>
            <person name="Wilson G.G."/>
            <person name="Xu S.Y."/>
        </authorList>
    </citation>
    <scope>NOMENCLATURE</scope>
    <scope>SUBTYPE</scope>
</reference>
<proteinExistence type="inferred from homology"/>
<organism>
    <name type="scientific">Paramecium bursaria Chlorella virus NC1A</name>
    <name type="common">PBCV-NC1A</name>
    <dbReference type="NCBI Taxonomy" id="46020"/>
    <lineage>
        <taxon>Viruses</taxon>
        <taxon>Varidnaviria</taxon>
        <taxon>Bamfordvirae</taxon>
        <taxon>Nucleocytoviricota</taxon>
        <taxon>Megaviricetes</taxon>
        <taxon>Algavirales</taxon>
        <taxon>Phycodnaviridae</taxon>
        <taxon>Chlorovirus</taxon>
    </lineage>
</organism>
<protein>
    <recommendedName>
        <fullName evidence="2">Type II methyltransferase M.CviBI</fullName>
        <shortName evidence="3">M.CviBI</shortName>
        <ecNumber>2.1.1.72</ecNumber>
    </recommendedName>
    <alternativeName>
        <fullName>Adenine-specific methyltransferase CviBI</fullName>
    </alternativeName>
    <alternativeName>
        <fullName>Modification methylase CviBI</fullName>
    </alternativeName>
</protein>
<comment type="function">
    <text evidence="2 5">A alpha subtype methylase, recognizes the double-stranded sequence 5'-GANTC-3', methylates A-2 on both strands, and protects the DNA from cleavage by the CviBI endonuclease.</text>
</comment>
<comment type="catalytic activity">
    <reaction>
        <text>a 2'-deoxyadenosine in DNA + S-adenosyl-L-methionine = an N(6)-methyl-2'-deoxyadenosine in DNA + S-adenosyl-L-homocysteine + H(+)</text>
        <dbReference type="Rhea" id="RHEA:15197"/>
        <dbReference type="Rhea" id="RHEA-COMP:12418"/>
        <dbReference type="Rhea" id="RHEA-COMP:12419"/>
        <dbReference type="ChEBI" id="CHEBI:15378"/>
        <dbReference type="ChEBI" id="CHEBI:57856"/>
        <dbReference type="ChEBI" id="CHEBI:59789"/>
        <dbReference type="ChEBI" id="CHEBI:90615"/>
        <dbReference type="ChEBI" id="CHEBI:90616"/>
        <dbReference type="EC" id="2.1.1.72"/>
    </reaction>
</comment>
<comment type="similarity">
    <text evidence="4">Belongs to the N(4)/N(6)-methyltransferase family.</text>
</comment>
<dbReference type="EC" id="2.1.1.72"/>
<dbReference type="EMBL" id="M96366">
    <property type="protein sequence ID" value="AAA88829.1"/>
    <property type="molecule type" value="Genomic_DNA"/>
</dbReference>
<dbReference type="SMR" id="Q01511"/>
<dbReference type="REBASE" id="3352">
    <property type="entry name" value="M.CviBI"/>
</dbReference>
<dbReference type="PRO" id="PR:Q01511"/>
<dbReference type="GO" id="GO:1904047">
    <property type="term" value="F:S-adenosyl-L-methionine binding"/>
    <property type="evidence" value="ECO:0007669"/>
    <property type="project" value="TreeGrafter"/>
</dbReference>
<dbReference type="GO" id="GO:0043565">
    <property type="term" value="F:sequence-specific DNA binding"/>
    <property type="evidence" value="ECO:0007669"/>
    <property type="project" value="TreeGrafter"/>
</dbReference>
<dbReference type="GO" id="GO:0009007">
    <property type="term" value="F:site-specific DNA-methyltransferase (adenine-specific) activity"/>
    <property type="evidence" value="ECO:0007669"/>
    <property type="project" value="UniProtKB-EC"/>
</dbReference>
<dbReference type="GO" id="GO:0009307">
    <property type="term" value="P:DNA restriction-modification system"/>
    <property type="evidence" value="ECO:0007669"/>
    <property type="project" value="UniProtKB-KW"/>
</dbReference>
<dbReference type="GO" id="GO:0032259">
    <property type="term" value="P:methylation"/>
    <property type="evidence" value="ECO:0007669"/>
    <property type="project" value="UniProtKB-KW"/>
</dbReference>
<dbReference type="GO" id="GO:0006298">
    <property type="term" value="P:mismatch repair"/>
    <property type="evidence" value="ECO:0007669"/>
    <property type="project" value="TreeGrafter"/>
</dbReference>
<dbReference type="Gene3D" id="1.10.1020.10">
    <property type="entry name" value="Adenine-specific Methyltransferase, Domain 2"/>
    <property type="match status" value="1"/>
</dbReference>
<dbReference type="Gene3D" id="3.40.50.150">
    <property type="entry name" value="Vaccinia Virus protein VP39"/>
    <property type="match status" value="1"/>
</dbReference>
<dbReference type="InterPro" id="IPR023095">
    <property type="entry name" value="Ade_MeTrfase_dom_2"/>
</dbReference>
<dbReference type="InterPro" id="IPR002052">
    <property type="entry name" value="DNA_methylase_N6_adenine_CS"/>
</dbReference>
<dbReference type="InterPro" id="IPR012263">
    <property type="entry name" value="M_m6A_EcoRV"/>
</dbReference>
<dbReference type="InterPro" id="IPR012327">
    <property type="entry name" value="MeTrfase_D12"/>
</dbReference>
<dbReference type="InterPro" id="IPR029063">
    <property type="entry name" value="SAM-dependent_MTases_sf"/>
</dbReference>
<dbReference type="NCBIfam" id="TIGR00571">
    <property type="entry name" value="dam"/>
    <property type="match status" value="1"/>
</dbReference>
<dbReference type="PANTHER" id="PTHR30481">
    <property type="entry name" value="DNA ADENINE METHYLASE"/>
    <property type="match status" value="1"/>
</dbReference>
<dbReference type="PANTHER" id="PTHR30481:SF3">
    <property type="entry name" value="DNA ADENINE METHYLASE"/>
    <property type="match status" value="1"/>
</dbReference>
<dbReference type="Pfam" id="PF02086">
    <property type="entry name" value="MethyltransfD12"/>
    <property type="match status" value="1"/>
</dbReference>
<dbReference type="PIRSF" id="PIRSF000398">
    <property type="entry name" value="M_m6A_EcoRV"/>
    <property type="match status" value="1"/>
</dbReference>
<dbReference type="PRINTS" id="PR00505">
    <property type="entry name" value="D12N6MTFRASE"/>
</dbReference>
<dbReference type="SUPFAM" id="SSF53335">
    <property type="entry name" value="S-adenosyl-L-methionine-dependent methyltransferases"/>
    <property type="match status" value="1"/>
</dbReference>
<dbReference type="PROSITE" id="PS00092">
    <property type="entry name" value="N6_MTASE"/>
    <property type="match status" value="1"/>
</dbReference>
<organismHost>
    <name type="scientific">Chlorella</name>
    <dbReference type="NCBI Taxonomy" id="3071"/>
</organismHost>
<accession>Q01511</accession>